<protein>
    <recommendedName>
        <fullName evidence="1">Cell division topological specificity factor</fullName>
    </recommendedName>
</protein>
<sequence length="106" mass="12101">MISELLERLFTRTPPSRTTAKERLKLVLAHDRTALTPEILDNLRRDILEVVSRYVELETEGLAVSLESDQRTTALIANLPIKRLKLSPEDAPLPENFPPENEAKER</sequence>
<evidence type="ECO:0000255" key="1">
    <source>
        <dbReference type="HAMAP-Rule" id="MF_00262"/>
    </source>
</evidence>
<evidence type="ECO:0000256" key="2">
    <source>
        <dbReference type="SAM" id="MobiDB-lite"/>
    </source>
</evidence>
<comment type="function">
    <text evidence="1">Prevents the cell division inhibition by proteins MinC and MinD at internal division sites while permitting inhibition at polar sites. This ensures cell division at the proper site by restricting the formation of a division septum at the midpoint of the long axis of the cell.</text>
</comment>
<comment type="similarity">
    <text evidence="1">Belongs to the MinE family.</text>
</comment>
<feature type="chain" id="PRO_0000298195" description="Cell division topological specificity factor">
    <location>
        <begin position="1"/>
        <end position="106"/>
    </location>
</feature>
<feature type="region of interest" description="Disordered" evidence="2">
    <location>
        <begin position="87"/>
        <end position="106"/>
    </location>
</feature>
<name>MINE_THEVB</name>
<dbReference type="EMBL" id="BA000039">
    <property type="protein sequence ID" value="BAC09570.1"/>
    <property type="molecule type" value="Genomic_DNA"/>
</dbReference>
<dbReference type="RefSeq" id="NP_682808.1">
    <property type="nucleotide sequence ID" value="NC_004113.1"/>
</dbReference>
<dbReference type="RefSeq" id="WP_011057853.1">
    <property type="nucleotide sequence ID" value="NC_004113.1"/>
</dbReference>
<dbReference type="SMR" id="Q8DHE1"/>
<dbReference type="STRING" id="197221.gene:10748627"/>
<dbReference type="EnsemblBacteria" id="BAC09570">
    <property type="protein sequence ID" value="BAC09570"/>
    <property type="gene ID" value="BAC09570"/>
</dbReference>
<dbReference type="KEGG" id="tel:tlr2018"/>
<dbReference type="PATRIC" id="fig|197221.4.peg.2111"/>
<dbReference type="eggNOG" id="COG0851">
    <property type="taxonomic scope" value="Bacteria"/>
</dbReference>
<dbReference type="Proteomes" id="UP000000440">
    <property type="component" value="Chromosome"/>
</dbReference>
<dbReference type="GO" id="GO:0051301">
    <property type="term" value="P:cell division"/>
    <property type="evidence" value="ECO:0007669"/>
    <property type="project" value="UniProtKB-KW"/>
</dbReference>
<dbReference type="GO" id="GO:0032955">
    <property type="term" value="P:regulation of division septum assembly"/>
    <property type="evidence" value="ECO:0007669"/>
    <property type="project" value="InterPro"/>
</dbReference>
<dbReference type="Gene3D" id="3.30.1070.10">
    <property type="entry name" value="Cell division topological specificity factor MinE"/>
    <property type="match status" value="1"/>
</dbReference>
<dbReference type="HAMAP" id="MF_00262">
    <property type="entry name" value="MinE"/>
    <property type="match status" value="1"/>
</dbReference>
<dbReference type="InterPro" id="IPR005527">
    <property type="entry name" value="MinE"/>
</dbReference>
<dbReference type="InterPro" id="IPR036707">
    <property type="entry name" value="MinE_sf"/>
</dbReference>
<dbReference type="NCBIfam" id="TIGR01215">
    <property type="entry name" value="minE"/>
    <property type="match status" value="1"/>
</dbReference>
<dbReference type="NCBIfam" id="NF001422">
    <property type="entry name" value="PRK00296.1"/>
    <property type="match status" value="1"/>
</dbReference>
<dbReference type="Pfam" id="PF03776">
    <property type="entry name" value="MinE"/>
    <property type="match status" value="1"/>
</dbReference>
<dbReference type="SUPFAM" id="SSF55229">
    <property type="entry name" value="Cell division protein MinE topological specificity domain"/>
    <property type="match status" value="1"/>
</dbReference>
<keyword id="KW-0131">Cell cycle</keyword>
<keyword id="KW-0132">Cell division</keyword>
<keyword id="KW-1185">Reference proteome</keyword>
<gene>
    <name evidence="1" type="primary">minE</name>
    <name type="ordered locus">tlr2018</name>
</gene>
<organism>
    <name type="scientific">Thermosynechococcus vestitus (strain NIES-2133 / IAM M-273 / BP-1)</name>
    <dbReference type="NCBI Taxonomy" id="197221"/>
    <lineage>
        <taxon>Bacteria</taxon>
        <taxon>Bacillati</taxon>
        <taxon>Cyanobacteriota</taxon>
        <taxon>Cyanophyceae</taxon>
        <taxon>Acaryochloridales</taxon>
        <taxon>Thermosynechococcaceae</taxon>
        <taxon>Thermosynechococcus</taxon>
    </lineage>
</organism>
<accession>Q8DHE1</accession>
<reference key="1">
    <citation type="journal article" date="2002" name="DNA Res.">
        <title>Complete genome structure of the thermophilic cyanobacterium Thermosynechococcus elongatus BP-1.</title>
        <authorList>
            <person name="Nakamura Y."/>
            <person name="Kaneko T."/>
            <person name="Sato S."/>
            <person name="Ikeuchi M."/>
            <person name="Katoh H."/>
            <person name="Sasamoto S."/>
            <person name="Watanabe A."/>
            <person name="Iriguchi M."/>
            <person name="Kawashima K."/>
            <person name="Kimura T."/>
            <person name="Kishida Y."/>
            <person name="Kiyokawa C."/>
            <person name="Kohara M."/>
            <person name="Matsumoto M."/>
            <person name="Matsuno A."/>
            <person name="Nakazaki N."/>
            <person name="Shimpo S."/>
            <person name="Sugimoto M."/>
            <person name="Takeuchi C."/>
            <person name="Yamada M."/>
            <person name="Tabata S."/>
        </authorList>
    </citation>
    <scope>NUCLEOTIDE SEQUENCE [LARGE SCALE GENOMIC DNA]</scope>
    <source>
        <strain>NIES-2133 / IAM M-273 / BP-1</strain>
    </source>
</reference>
<proteinExistence type="inferred from homology"/>